<comment type="function">
    <text>Potential calcium-dependent cell-adhesion protein. May be involved in the establishment and maintenance of specific neuronal connections in the brain.</text>
</comment>
<comment type="subcellular location">
    <subcellularLocation>
        <location evidence="1">Cell membrane</location>
        <topology evidence="1">Single-pass type I membrane protein</topology>
    </subcellularLocation>
</comment>
<reference key="1">
    <citation type="journal article" date="2005" name="Nature">
        <title>Initial sequence of the chimpanzee genome and comparison with the human genome.</title>
        <authorList>
            <consortium name="Chimpanzee sequencing and analysis consortium"/>
        </authorList>
    </citation>
    <scope>NUCLEOTIDE SEQUENCE [LARGE SCALE GENOMIC DNA]</scope>
</reference>
<reference key="2">
    <citation type="journal article" date="2005" name="Genetics">
        <title>Comparative genomics and diversifying selection of the clustered vertebrate protocadherin genes.</title>
        <authorList>
            <person name="Wu Q."/>
        </authorList>
    </citation>
    <scope>IDENTIFICATION</scope>
</reference>
<sequence length="797" mass="87190">MKTRGFSFPRQRQVLFLFLFWGVSLAGSGFGRYSVTEETEKGSFVVNLAKDLGLAEGKLAARGTRVVSDDNKQYLLLDSHTGNLLTNEKLDREKLCGPKEPCMLYFQILMDDPFQIYRAELRVRDINDHSPVFRHKEMVLKISENTAEGTAFRLERAQDPDEGHNSIQNYTISPNSFFHIKISGSDEGMIYPELVLDKALDREEQEELSLTLTALDGGSPSRSGTSTIRIVVLDVNDNAPQFAQALYETQAPENSPVGSRIVKVSAGDADSGVNAEVSYSFFDASEDILTTFQINPSSGEIFLRELLDYELVNSYKRNIQAMDGGGLSARCTVLIKVLDSNDNPPELIISSLSNSVAENSPGIVLAVFKIKDRDSGENGKTICYVQDNLPFFLKPSVDNFYILMTEGALDRESKAEYNITITVTDLGTPRLKTEHSITLQVSDVNDNAPAFTQTSYTLFVRENNSPALHVGSVSPTDGDSGTNAQVTYSLLPPQDPHLPLASLVSINADNGHLFALRSLDYEALQAFEFRVGATDRGSPALSSEALVRVLVLDANDNSPFVLYPLQNGSAPCTELVPRAAEPGYLVTKVVAVDGDSGQNAWLSYQLLKATEPGLFGVWAHNGEVRTARLLSERDAAKHRLVVLVKDNGEPPRSATATLHVLLVDGFSQPYLPLPEAAPAQAQADSLTVYLVVALASVSSLFLLSVLLFVAVRLCRRSRAASVGRCSVPEGPFPGHLVDVSGTGTLFQSYQYEVCLTGGSETGEFKFLKPITRHLPPHRVGKEIEENSTLHNSFGFNY</sequence>
<name>PCDB9_PANTR</name>
<dbReference type="SMR" id="Q5DRC4"/>
<dbReference type="FunCoup" id="Q5DRC4">
    <property type="interactions" value="41"/>
</dbReference>
<dbReference type="STRING" id="9598.ENSPTRP00000047954"/>
<dbReference type="GlyCosmos" id="Q5DRC4">
    <property type="glycosylation" value="3 sites, No reported glycans"/>
</dbReference>
<dbReference type="PaxDb" id="9598-ENSPTRP00000054380"/>
<dbReference type="eggNOG" id="KOG3594">
    <property type="taxonomic scope" value="Eukaryota"/>
</dbReference>
<dbReference type="InParanoid" id="Q5DRC4"/>
<dbReference type="Proteomes" id="UP000002277">
    <property type="component" value="Unplaced"/>
</dbReference>
<dbReference type="GO" id="GO:0005886">
    <property type="term" value="C:plasma membrane"/>
    <property type="evidence" value="ECO:0000318"/>
    <property type="project" value="GO_Central"/>
</dbReference>
<dbReference type="GO" id="GO:0005509">
    <property type="term" value="F:calcium ion binding"/>
    <property type="evidence" value="ECO:0007669"/>
    <property type="project" value="InterPro"/>
</dbReference>
<dbReference type="GO" id="GO:0007155">
    <property type="term" value="P:cell adhesion"/>
    <property type="evidence" value="ECO:0000318"/>
    <property type="project" value="GO_Central"/>
</dbReference>
<dbReference type="GO" id="GO:0007156">
    <property type="term" value="P:homophilic cell adhesion via plasma membrane adhesion molecules"/>
    <property type="evidence" value="ECO:0007669"/>
    <property type="project" value="InterPro"/>
</dbReference>
<dbReference type="GO" id="GO:0007399">
    <property type="term" value="P:nervous system development"/>
    <property type="evidence" value="ECO:0007669"/>
    <property type="project" value="UniProtKB-ARBA"/>
</dbReference>
<dbReference type="CDD" id="cd11304">
    <property type="entry name" value="Cadherin_repeat"/>
    <property type="match status" value="4"/>
</dbReference>
<dbReference type="FunFam" id="2.60.40.60:FF:000001">
    <property type="entry name" value="Protocadherin alpha 2"/>
    <property type="match status" value="1"/>
</dbReference>
<dbReference type="FunFam" id="2.60.40.60:FF:000002">
    <property type="entry name" value="Protocadherin alpha 2"/>
    <property type="match status" value="1"/>
</dbReference>
<dbReference type="FunFam" id="2.60.40.60:FF:000006">
    <property type="entry name" value="Protocadherin alpha 2"/>
    <property type="match status" value="1"/>
</dbReference>
<dbReference type="FunFam" id="2.60.40.60:FF:000046">
    <property type="entry name" value="Protocadherin beta 5"/>
    <property type="match status" value="1"/>
</dbReference>
<dbReference type="FunFam" id="2.60.40.60:FF:000309">
    <property type="entry name" value="Protocadherin beta-8"/>
    <property type="match status" value="1"/>
</dbReference>
<dbReference type="FunFam" id="2.60.40.60:FF:000018">
    <property type="entry name" value="Protocadherin gamma c3"/>
    <property type="match status" value="1"/>
</dbReference>
<dbReference type="Gene3D" id="2.60.40.60">
    <property type="entry name" value="Cadherins"/>
    <property type="match status" value="6"/>
</dbReference>
<dbReference type="InterPro" id="IPR002126">
    <property type="entry name" value="Cadherin-like_dom"/>
</dbReference>
<dbReference type="InterPro" id="IPR015919">
    <property type="entry name" value="Cadherin-like_sf"/>
</dbReference>
<dbReference type="InterPro" id="IPR032455">
    <property type="entry name" value="Cadherin_C"/>
</dbReference>
<dbReference type="InterPro" id="IPR020894">
    <property type="entry name" value="Cadherin_CS"/>
</dbReference>
<dbReference type="InterPro" id="IPR013164">
    <property type="entry name" value="Cadherin_N"/>
</dbReference>
<dbReference type="InterPro" id="IPR050174">
    <property type="entry name" value="Protocadherin/Cadherin-CA"/>
</dbReference>
<dbReference type="PANTHER" id="PTHR24028">
    <property type="entry name" value="CADHERIN-87A"/>
    <property type="match status" value="1"/>
</dbReference>
<dbReference type="PANTHER" id="PTHR24028:SF128">
    <property type="entry name" value="PROTOCADHERIN BETA-9"/>
    <property type="match status" value="1"/>
</dbReference>
<dbReference type="Pfam" id="PF00028">
    <property type="entry name" value="Cadherin"/>
    <property type="match status" value="5"/>
</dbReference>
<dbReference type="Pfam" id="PF08266">
    <property type="entry name" value="Cadherin_2"/>
    <property type="match status" value="1"/>
</dbReference>
<dbReference type="Pfam" id="PF16492">
    <property type="entry name" value="Cadherin_C_2"/>
    <property type="match status" value="1"/>
</dbReference>
<dbReference type="PRINTS" id="PR00205">
    <property type="entry name" value="CADHERIN"/>
</dbReference>
<dbReference type="SMART" id="SM00112">
    <property type="entry name" value="CA"/>
    <property type="match status" value="5"/>
</dbReference>
<dbReference type="SUPFAM" id="SSF49313">
    <property type="entry name" value="Cadherin-like"/>
    <property type="match status" value="6"/>
</dbReference>
<dbReference type="PROSITE" id="PS00232">
    <property type="entry name" value="CADHERIN_1"/>
    <property type="match status" value="5"/>
</dbReference>
<dbReference type="PROSITE" id="PS50268">
    <property type="entry name" value="CADHERIN_2"/>
    <property type="match status" value="6"/>
</dbReference>
<proteinExistence type="inferred from homology"/>
<accession>Q5DRC4</accession>
<gene>
    <name type="primary">PCDHB9</name>
</gene>
<organism>
    <name type="scientific">Pan troglodytes</name>
    <name type="common">Chimpanzee</name>
    <dbReference type="NCBI Taxonomy" id="9598"/>
    <lineage>
        <taxon>Eukaryota</taxon>
        <taxon>Metazoa</taxon>
        <taxon>Chordata</taxon>
        <taxon>Craniata</taxon>
        <taxon>Vertebrata</taxon>
        <taxon>Euteleostomi</taxon>
        <taxon>Mammalia</taxon>
        <taxon>Eutheria</taxon>
        <taxon>Euarchontoglires</taxon>
        <taxon>Primates</taxon>
        <taxon>Haplorrhini</taxon>
        <taxon>Catarrhini</taxon>
        <taxon>Hominidae</taxon>
        <taxon>Pan</taxon>
    </lineage>
</organism>
<feature type="signal peptide" evidence="2">
    <location>
        <begin position="1"/>
        <end position="26"/>
    </location>
</feature>
<feature type="chain" id="PRO_0000003931" description="Protocadherin beta-9">
    <location>
        <begin position="27"/>
        <end position="797"/>
    </location>
</feature>
<feature type="topological domain" description="Extracellular" evidence="2">
    <location>
        <begin position="27"/>
        <end position="690"/>
    </location>
</feature>
<feature type="transmembrane region" description="Helical" evidence="2">
    <location>
        <begin position="691"/>
        <end position="711"/>
    </location>
</feature>
<feature type="topological domain" description="Cytoplasmic" evidence="2">
    <location>
        <begin position="712"/>
        <end position="797"/>
    </location>
</feature>
<feature type="domain" description="Cadherin 1" evidence="3">
    <location>
        <begin position="35"/>
        <end position="133"/>
    </location>
</feature>
<feature type="domain" description="Cadherin 2" evidence="3">
    <location>
        <begin position="138"/>
        <end position="242"/>
    </location>
</feature>
<feature type="domain" description="Cadherin 3" evidence="3">
    <location>
        <begin position="247"/>
        <end position="347"/>
    </location>
</feature>
<feature type="domain" description="Cadherin 4" evidence="3">
    <location>
        <begin position="352"/>
        <end position="451"/>
    </location>
</feature>
<feature type="domain" description="Cadherin 5" evidence="3">
    <location>
        <begin position="456"/>
        <end position="561"/>
    </location>
</feature>
<feature type="domain" description="Cadherin 6" evidence="3">
    <location>
        <begin position="568"/>
        <end position="671"/>
    </location>
</feature>
<feature type="glycosylation site" description="N-linked (GlcNAc...) asparagine" evidence="2">
    <location>
        <position position="169"/>
    </location>
</feature>
<feature type="glycosylation site" description="N-linked (GlcNAc...) asparagine" evidence="2">
    <location>
        <position position="418"/>
    </location>
</feature>
<feature type="glycosylation site" description="N-linked (GlcNAc...) asparagine" evidence="2">
    <location>
        <position position="567"/>
    </location>
</feature>
<protein>
    <recommendedName>
        <fullName>Protocadherin beta-9</fullName>
        <shortName>PCDH-beta-9</shortName>
    </recommendedName>
</protein>
<keyword id="KW-0106">Calcium</keyword>
<keyword id="KW-0130">Cell adhesion</keyword>
<keyword id="KW-1003">Cell membrane</keyword>
<keyword id="KW-0325">Glycoprotein</keyword>
<keyword id="KW-0472">Membrane</keyword>
<keyword id="KW-1185">Reference proteome</keyword>
<keyword id="KW-0677">Repeat</keyword>
<keyword id="KW-0732">Signal</keyword>
<keyword id="KW-0812">Transmembrane</keyword>
<keyword id="KW-1133">Transmembrane helix</keyword>
<evidence type="ECO:0000250" key="1"/>
<evidence type="ECO:0000255" key="2"/>
<evidence type="ECO:0000255" key="3">
    <source>
        <dbReference type="PROSITE-ProRule" id="PRU00043"/>
    </source>
</evidence>